<dbReference type="EMBL" id="CR848038">
    <property type="protein sequence ID" value="CAH63904.1"/>
    <property type="molecule type" value="Genomic_DNA"/>
</dbReference>
<dbReference type="SMR" id="Q5L627"/>
<dbReference type="KEGG" id="cab:CAB451"/>
<dbReference type="eggNOG" id="COG0532">
    <property type="taxonomic scope" value="Bacteria"/>
</dbReference>
<dbReference type="HOGENOM" id="CLU_006301_3_2_0"/>
<dbReference type="Proteomes" id="UP000001012">
    <property type="component" value="Chromosome"/>
</dbReference>
<dbReference type="GO" id="GO:0005829">
    <property type="term" value="C:cytosol"/>
    <property type="evidence" value="ECO:0007669"/>
    <property type="project" value="TreeGrafter"/>
</dbReference>
<dbReference type="GO" id="GO:0005525">
    <property type="term" value="F:GTP binding"/>
    <property type="evidence" value="ECO:0007669"/>
    <property type="project" value="UniProtKB-KW"/>
</dbReference>
<dbReference type="GO" id="GO:0003924">
    <property type="term" value="F:GTPase activity"/>
    <property type="evidence" value="ECO:0007669"/>
    <property type="project" value="UniProtKB-UniRule"/>
</dbReference>
<dbReference type="GO" id="GO:0003743">
    <property type="term" value="F:translation initiation factor activity"/>
    <property type="evidence" value="ECO:0007669"/>
    <property type="project" value="UniProtKB-UniRule"/>
</dbReference>
<dbReference type="CDD" id="cd01887">
    <property type="entry name" value="IF2_eIF5B"/>
    <property type="match status" value="1"/>
</dbReference>
<dbReference type="CDD" id="cd03702">
    <property type="entry name" value="IF2_mtIF2_II"/>
    <property type="match status" value="1"/>
</dbReference>
<dbReference type="CDD" id="cd03692">
    <property type="entry name" value="mtIF2_IVc"/>
    <property type="match status" value="1"/>
</dbReference>
<dbReference type="FunFam" id="2.40.30.10:FF:000008">
    <property type="entry name" value="Translation initiation factor IF-2"/>
    <property type="match status" value="1"/>
</dbReference>
<dbReference type="FunFam" id="2.40.30.10:FF:000054">
    <property type="entry name" value="Translation initiation factor IF-2"/>
    <property type="match status" value="1"/>
</dbReference>
<dbReference type="FunFam" id="3.40.50.10050:FF:000001">
    <property type="entry name" value="Translation initiation factor IF-2"/>
    <property type="match status" value="1"/>
</dbReference>
<dbReference type="FunFam" id="3.40.50.300:FF:000019">
    <property type="entry name" value="Translation initiation factor IF-2"/>
    <property type="match status" value="1"/>
</dbReference>
<dbReference type="Gene3D" id="3.40.50.300">
    <property type="entry name" value="P-loop containing nucleotide triphosphate hydrolases"/>
    <property type="match status" value="1"/>
</dbReference>
<dbReference type="Gene3D" id="2.40.30.10">
    <property type="entry name" value="Translation factors"/>
    <property type="match status" value="2"/>
</dbReference>
<dbReference type="Gene3D" id="3.40.50.10050">
    <property type="entry name" value="Translation initiation factor IF- 2, domain 3"/>
    <property type="match status" value="1"/>
</dbReference>
<dbReference type="HAMAP" id="MF_00100_B">
    <property type="entry name" value="IF_2_B"/>
    <property type="match status" value="1"/>
</dbReference>
<dbReference type="InterPro" id="IPR053905">
    <property type="entry name" value="EF-G-like_DII"/>
</dbReference>
<dbReference type="InterPro" id="IPR004161">
    <property type="entry name" value="EFTu-like_2"/>
</dbReference>
<dbReference type="InterPro" id="IPR044145">
    <property type="entry name" value="IF2_II"/>
</dbReference>
<dbReference type="InterPro" id="IPR006847">
    <property type="entry name" value="IF2_N"/>
</dbReference>
<dbReference type="InterPro" id="IPR027417">
    <property type="entry name" value="P-loop_NTPase"/>
</dbReference>
<dbReference type="InterPro" id="IPR005225">
    <property type="entry name" value="Small_GTP-bd"/>
</dbReference>
<dbReference type="InterPro" id="IPR000795">
    <property type="entry name" value="T_Tr_GTP-bd_dom"/>
</dbReference>
<dbReference type="InterPro" id="IPR000178">
    <property type="entry name" value="TF_IF2_bacterial-like"/>
</dbReference>
<dbReference type="InterPro" id="IPR015760">
    <property type="entry name" value="TIF_IF2"/>
</dbReference>
<dbReference type="InterPro" id="IPR023115">
    <property type="entry name" value="TIF_IF2_dom3"/>
</dbReference>
<dbReference type="InterPro" id="IPR036925">
    <property type="entry name" value="TIF_IF2_dom3_sf"/>
</dbReference>
<dbReference type="InterPro" id="IPR009000">
    <property type="entry name" value="Transl_B-barrel_sf"/>
</dbReference>
<dbReference type="NCBIfam" id="TIGR00487">
    <property type="entry name" value="IF-2"/>
    <property type="match status" value="1"/>
</dbReference>
<dbReference type="NCBIfam" id="TIGR00231">
    <property type="entry name" value="small_GTP"/>
    <property type="match status" value="1"/>
</dbReference>
<dbReference type="PANTHER" id="PTHR43381:SF5">
    <property type="entry name" value="TR-TYPE G DOMAIN-CONTAINING PROTEIN"/>
    <property type="match status" value="1"/>
</dbReference>
<dbReference type="PANTHER" id="PTHR43381">
    <property type="entry name" value="TRANSLATION INITIATION FACTOR IF-2-RELATED"/>
    <property type="match status" value="1"/>
</dbReference>
<dbReference type="Pfam" id="PF22042">
    <property type="entry name" value="EF-G_D2"/>
    <property type="match status" value="1"/>
</dbReference>
<dbReference type="Pfam" id="PF00009">
    <property type="entry name" value="GTP_EFTU"/>
    <property type="match status" value="1"/>
</dbReference>
<dbReference type="Pfam" id="PF03144">
    <property type="entry name" value="GTP_EFTU_D2"/>
    <property type="match status" value="1"/>
</dbReference>
<dbReference type="Pfam" id="PF11987">
    <property type="entry name" value="IF-2"/>
    <property type="match status" value="1"/>
</dbReference>
<dbReference type="Pfam" id="PF04760">
    <property type="entry name" value="IF2_N"/>
    <property type="match status" value="1"/>
</dbReference>
<dbReference type="SUPFAM" id="SSF52156">
    <property type="entry name" value="Initiation factor IF2/eIF5b, domain 3"/>
    <property type="match status" value="1"/>
</dbReference>
<dbReference type="SUPFAM" id="SSF52540">
    <property type="entry name" value="P-loop containing nucleoside triphosphate hydrolases"/>
    <property type="match status" value="1"/>
</dbReference>
<dbReference type="SUPFAM" id="SSF50447">
    <property type="entry name" value="Translation proteins"/>
    <property type="match status" value="2"/>
</dbReference>
<dbReference type="PROSITE" id="PS51722">
    <property type="entry name" value="G_TR_2"/>
    <property type="match status" value="1"/>
</dbReference>
<dbReference type="PROSITE" id="PS01176">
    <property type="entry name" value="IF2"/>
    <property type="match status" value="1"/>
</dbReference>
<gene>
    <name evidence="2" type="primary">infB</name>
    <name type="ordered locus">CAB451</name>
</gene>
<evidence type="ECO:0000250" key="1"/>
<evidence type="ECO:0000255" key="2">
    <source>
        <dbReference type="HAMAP-Rule" id="MF_00100"/>
    </source>
</evidence>
<evidence type="ECO:0000256" key="3">
    <source>
        <dbReference type="SAM" id="MobiDB-lite"/>
    </source>
</evidence>
<proteinExistence type="inferred from homology"/>
<protein>
    <recommendedName>
        <fullName evidence="2">Translation initiation factor IF-2</fullName>
    </recommendedName>
</protein>
<comment type="function">
    <text evidence="2">One of the essential components for the initiation of protein synthesis. Protects formylmethionyl-tRNA from spontaneous hydrolysis and promotes its binding to the 30S ribosomal subunits. Also involved in the hydrolysis of GTP during the formation of the 70S ribosomal complex.</text>
</comment>
<comment type="subcellular location">
    <subcellularLocation>
        <location evidence="2">Cytoplasm</location>
    </subcellularLocation>
</comment>
<comment type="similarity">
    <text evidence="2">Belongs to the TRAFAC class translation factor GTPase superfamily. Classic translation factor GTPase family. IF-2 subfamily.</text>
</comment>
<organism>
    <name type="scientific">Chlamydia abortus (strain DSM 27085 / S26/3)</name>
    <name type="common">Chlamydophila abortus</name>
    <dbReference type="NCBI Taxonomy" id="218497"/>
    <lineage>
        <taxon>Bacteria</taxon>
        <taxon>Pseudomonadati</taxon>
        <taxon>Chlamydiota</taxon>
        <taxon>Chlamydiia</taxon>
        <taxon>Chlamydiales</taxon>
        <taxon>Chlamydiaceae</taxon>
        <taxon>Chlamydia/Chlamydophila group</taxon>
        <taxon>Chlamydia</taxon>
    </lineage>
</organism>
<keyword id="KW-0963">Cytoplasm</keyword>
<keyword id="KW-0342">GTP-binding</keyword>
<keyword id="KW-0396">Initiation factor</keyword>
<keyword id="KW-0547">Nucleotide-binding</keyword>
<keyword id="KW-0648">Protein biosynthesis</keyword>
<accession>Q5L627</accession>
<reference key="1">
    <citation type="journal article" date="2005" name="Genome Res.">
        <title>The Chlamydophila abortus genome sequence reveals an array of variable proteins that contribute to interspecies variation.</title>
        <authorList>
            <person name="Thomson N.R."/>
            <person name="Yeats C."/>
            <person name="Bell K."/>
            <person name="Holden M.T.G."/>
            <person name="Bentley S.D."/>
            <person name="Livingstone M."/>
            <person name="Cerdeno-Tarraga A.-M."/>
            <person name="Harris B."/>
            <person name="Doggett J."/>
            <person name="Ormond D."/>
            <person name="Mungall K."/>
            <person name="Clarke K."/>
            <person name="Feltwell T."/>
            <person name="Hance Z."/>
            <person name="Sanders M."/>
            <person name="Quail M.A."/>
            <person name="Price C."/>
            <person name="Barrell B.G."/>
            <person name="Parkhill J."/>
            <person name="Longbottom D."/>
        </authorList>
    </citation>
    <scope>NUCLEOTIDE SEQUENCE [LARGE SCALE GENOMIC DNA]</scope>
    <source>
        <strain>DSM 27085 / S26/3</strain>
    </source>
</reference>
<feature type="chain" id="PRO_0000228183" description="Translation initiation factor IF-2">
    <location>
        <begin position="1"/>
        <end position="874"/>
    </location>
</feature>
<feature type="domain" description="tr-type G">
    <location>
        <begin position="380"/>
        <end position="549"/>
    </location>
</feature>
<feature type="region of interest" description="Disordered" evidence="3">
    <location>
        <begin position="1"/>
        <end position="289"/>
    </location>
</feature>
<feature type="region of interest" description="G1" evidence="1">
    <location>
        <begin position="389"/>
        <end position="396"/>
    </location>
</feature>
<feature type="region of interest" description="G2" evidence="1">
    <location>
        <begin position="414"/>
        <end position="418"/>
    </location>
</feature>
<feature type="region of interest" description="G3" evidence="1">
    <location>
        <begin position="435"/>
        <end position="438"/>
    </location>
</feature>
<feature type="region of interest" description="G4" evidence="1">
    <location>
        <begin position="489"/>
        <end position="492"/>
    </location>
</feature>
<feature type="region of interest" description="G5" evidence="1">
    <location>
        <begin position="525"/>
        <end position="527"/>
    </location>
</feature>
<feature type="compositionally biased region" description="Basic and acidic residues" evidence="3">
    <location>
        <begin position="31"/>
        <end position="48"/>
    </location>
</feature>
<feature type="compositionally biased region" description="Polar residues" evidence="3">
    <location>
        <begin position="81"/>
        <end position="104"/>
    </location>
</feature>
<feature type="compositionally biased region" description="Low complexity" evidence="3">
    <location>
        <begin position="105"/>
        <end position="118"/>
    </location>
</feature>
<feature type="compositionally biased region" description="Basic and acidic residues" evidence="3">
    <location>
        <begin position="144"/>
        <end position="158"/>
    </location>
</feature>
<feature type="compositionally biased region" description="Basic and acidic residues" evidence="3">
    <location>
        <begin position="186"/>
        <end position="198"/>
    </location>
</feature>
<feature type="compositionally biased region" description="Polar residues" evidence="3">
    <location>
        <begin position="199"/>
        <end position="211"/>
    </location>
</feature>
<feature type="compositionally biased region" description="Basic and acidic residues" evidence="3">
    <location>
        <begin position="228"/>
        <end position="260"/>
    </location>
</feature>
<feature type="compositionally biased region" description="Basic residues" evidence="3">
    <location>
        <begin position="271"/>
        <end position="280"/>
    </location>
</feature>
<feature type="binding site" evidence="2">
    <location>
        <begin position="389"/>
        <end position="396"/>
    </location>
    <ligand>
        <name>GTP</name>
        <dbReference type="ChEBI" id="CHEBI:37565"/>
    </ligand>
</feature>
<feature type="binding site" evidence="2">
    <location>
        <begin position="435"/>
        <end position="439"/>
    </location>
    <ligand>
        <name>GTP</name>
        <dbReference type="ChEBI" id="CHEBI:37565"/>
    </ligand>
</feature>
<feature type="binding site" evidence="2">
    <location>
        <begin position="489"/>
        <end position="492"/>
    </location>
    <ligand>
        <name>GTP</name>
        <dbReference type="ChEBI" id="CHEBI:37565"/>
    </ligand>
</feature>
<name>IF2_CHLAB</name>
<sequence>MKIKNAQLTKAAGLDKLKQKLAQAGSSDTKSSSEKPTTKVPEKVAKEKVVKKKSVLDSSVPTMAEHVSTETSPRRIRAKNRSSFASEDSTIPSPVSVDTESTAFSPPVVEEVVSPLESAEPEIVEPTPASIVDEPETTIQEPPPPKKEAELVVKKEPPKNVVSIKSNFGPTGKHINHLLAKTFKAPKKEDKPAPKERTGTVQTKPQQSSEVPSDKQHSSNNRQSQPFYRRDTSKRPGSDFRDRSKKDDSPKAFTGRDRYGLNDSSDDDKWRKKRVQKTKKHYDEHSVQRPTHIKVPLPITIKDLAAEMKLKASELIQKMFIHGMTYVVNDVLDNETTVQFIGLEFGCTIDIDSSEQDKLCIESNTVKEEIQETDPSQLIIRPPIVAFMGHVDHGKTTLIDSLRKSNVAAVEAGAITQHMGAFCCSTPVGNITILDTPGHEAFSAMRARGAEVCDIVVLVVAGDEGIKEQTLEAVKHARAANITIVVAINKCDKPNFNADTVYRQLSEINLLPEAWGGTTVTINTSAKTGEGLSELLEMLALQAEVLELKANPEARARGIVIESELHKGLGAVATILVQNGTLHLGEALVFNDCYGKVKTMHNEHNQLMTSASPSVPALITGLSSMPKAGDPFVVVKNEKTAKEIVNARIAGQQKFALQKKRPNFDAMLQNKKILKLIIKADVQGSIEALSSSVLKIVSDKVSAEILSSSVGEISESDIRLAAASKAVIIGFHTGIESHAESLIKNLGVKVHLFNIIYHAVDAVKEMMTALLDPIAEERNLGSAEIKETFKSSQLGTIYGCLVSEGVMTRNQKVRVVRNNEVLWKGNLSSLKRIKEDVKEVKKGLECGILLEGYQNAQVGDILQCYEVIYHPQKL</sequence>